<feature type="chain" id="PRO_1000060849" description="UPF0181 protein KPN78578_22920">
    <location>
        <begin position="1"/>
        <end position="61"/>
    </location>
</feature>
<name>Y2292_KLEP7</name>
<protein>
    <recommendedName>
        <fullName evidence="1">UPF0181 protein KPN78578_22920</fullName>
    </recommendedName>
</protein>
<comment type="similarity">
    <text evidence="1">Belongs to the UPF0181 family.</text>
</comment>
<accession>A6TAY2</accession>
<organism>
    <name type="scientific">Klebsiella pneumoniae subsp. pneumoniae (strain ATCC 700721 / MGH 78578)</name>
    <dbReference type="NCBI Taxonomy" id="272620"/>
    <lineage>
        <taxon>Bacteria</taxon>
        <taxon>Pseudomonadati</taxon>
        <taxon>Pseudomonadota</taxon>
        <taxon>Gammaproteobacteria</taxon>
        <taxon>Enterobacterales</taxon>
        <taxon>Enterobacteriaceae</taxon>
        <taxon>Klebsiella/Raoultella group</taxon>
        <taxon>Klebsiella</taxon>
        <taxon>Klebsiella pneumoniae complex</taxon>
    </lineage>
</organism>
<sequence>MFAGLPSLSHEQQQKAVERIHELMAQGISSGQAIALVAEELRATHTGEQIVARFEDEDEDE</sequence>
<dbReference type="EMBL" id="CP000647">
    <property type="protein sequence ID" value="ABR77753.1"/>
    <property type="molecule type" value="Genomic_DNA"/>
</dbReference>
<dbReference type="RefSeq" id="WP_004145519.1">
    <property type="nucleotide sequence ID" value="NC_009648.1"/>
</dbReference>
<dbReference type="SMR" id="A6TAY2"/>
<dbReference type="STRING" id="272620.KPN_02327"/>
<dbReference type="PaxDb" id="272620-KPN_02327"/>
<dbReference type="EnsemblBacteria" id="ABR77753">
    <property type="protein sequence ID" value="ABR77753"/>
    <property type="gene ID" value="KPN_02327"/>
</dbReference>
<dbReference type="KEGG" id="kpn:KPN_02327"/>
<dbReference type="HOGENOM" id="CLU_185263_0_0_6"/>
<dbReference type="Proteomes" id="UP000000265">
    <property type="component" value="Chromosome"/>
</dbReference>
<dbReference type="HAMAP" id="MF_00507">
    <property type="entry name" value="UPF0181"/>
    <property type="match status" value="1"/>
</dbReference>
<dbReference type="InterPro" id="IPR005371">
    <property type="entry name" value="UPF0181"/>
</dbReference>
<dbReference type="NCBIfam" id="NF003476">
    <property type="entry name" value="PRK05114.1"/>
    <property type="match status" value="1"/>
</dbReference>
<dbReference type="Pfam" id="PF03701">
    <property type="entry name" value="UPF0181"/>
    <property type="match status" value="1"/>
</dbReference>
<proteinExistence type="inferred from homology"/>
<evidence type="ECO:0000255" key="1">
    <source>
        <dbReference type="HAMAP-Rule" id="MF_00507"/>
    </source>
</evidence>
<gene>
    <name type="ordered locus">KPN78578_22920</name>
    <name type="ORF">KPN_02327</name>
</gene>
<reference key="1">
    <citation type="submission" date="2006-09" db="EMBL/GenBank/DDBJ databases">
        <authorList>
            <consortium name="The Klebsiella pneumonia Genome Sequencing Project"/>
            <person name="McClelland M."/>
            <person name="Sanderson E.K."/>
            <person name="Spieth J."/>
            <person name="Clifton W.S."/>
            <person name="Latreille P."/>
            <person name="Sabo A."/>
            <person name="Pepin K."/>
            <person name="Bhonagiri V."/>
            <person name="Porwollik S."/>
            <person name="Ali J."/>
            <person name="Wilson R.K."/>
        </authorList>
    </citation>
    <scope>NUCLEOTIDE SEQUENCE [LARGE SCALE GENOMIC DNA]</scope>
    <source>
        <strain>ATCC 700721 / MGH 78578</strain>
    </source>
</reference>